<accession>B4TKE7</accession>
<protein>
    <recommendedName>
        <fullName evidence="1">Cell division topological specificity factor</fullName>
    </recommendedName>
</protein>
<organism>
    <name type="scientific">Salmonella heidelberg (strain SL476)</name>
    <dbReference type="NCBI Taxonomy" id="454169"/>
    <lineage>
        <taxon>Bacteria</taxon>
        <taxon>Pseudomonadati</taxon>
        <taxon>Pseudomonadota</taxon>
        <taxon>Gammaproteobacteria</taxon>
        <taxon>Enterobacterales</taxon>
        <taxon>Enterobacteriaceae</taxon>
        <taxon>Salmonella</taxon>
    </lineage>
</organism>
<feature type="chain" id="PRO_1000114241" description="Cell division topological specificity factor">
    <location>
        <begin position="1"/>
        <end position="88"/>
    </location>
</feature>
<name>MINE_SALHS</name>
<sequence>MALLDFFLSRKKSTANIAKERLQIIVAERRRSDAEPHYLPQLRKDILEVICKYVQIDPEMVTVQLEQKDGDISILELNVTLPEAEESK</sequence>
<keyword id="KW-0131">Cell cycle</keyword>
<keyword id="KW-0132">Cell division</keyword>
<proteinExistence type="inferred from homology"/>
<gene>
    <name evidence="1" type="primary">minE</name>
    <name type="ordered locus">SeHA_C2015</name>
</gene>
<dbReference type="EMBL" id="CP001120">
    <property type="protein sequence ID" value="ACF66871.1"/>
    <property type="molecule type" value="Genomic_DNA"/>
</dbReference>
<dbReference type="RefSeq" id="WP_001185666.1">
    <property type="nucleotide sequence ID" value="NC_011083.1"/>
</dbReference>
<dbReference type="SMR" id="B4TKE7"/>
<dbReference type="GeneID" id="92972923"/>
<dbReference type="KEGG" id="seh:SeHA_C2015"/>
<dbReference type="HOGENOM" id="CLU_137929_2_2_6"/>
<dbReference type="Proteomes" id="UP000001866">
    <property type="component" value="Chromosome"/>
</dbReference>
<dbReference type="GO" id="GO:0051301">
    <property type="term" value="P:cell division"/>
    <property type="evidence" value="ECO:0007669"/>
    <property type="project" value="UniProtKB-KW"/>
</dbReference>
<dbReference type="GO" id="GO:0032955">
    <property type="term" value="P:regulation of division septum assembly"/>
    <property type="evidence" value="ECO:0007669"/>
    <property type="project" value="InterPro"/>
</dbReference>
<dbReference type="FunFam" id="3.30.1070.10:FF:000001">
    <property type="entry name" value="Cell division topological specificity factor"/>
    <property type="match status" value="1"/>
</dbReference>
<dbReference type="Gene3D" id="3.30.1070.10">
    <property type="entry name" value="Cell division topological specificity factor MinE"/>
    <property type="match status" value="1"/>
</dbReference>
<dbReference type="HAMAP" id="MF_00262">
    <property type="entry name" value="MinE"/>
    <property type="match status" value="1"/>
</dbReference>
<dbReference type="InterPro" id="IPR005527">
    <property type="entry name" value="MinE"/>
</dbReference>
<dbReference type="InterPro" id="IPR036707">
    <property type="entry name" value="MinE_sf"/>
</dbReference>
<dbReference type="NCBIfam" id="TIGR01215">
    <property type="entry name" value="minE"/>
    <property type="match status" value="1"/>
</dbReference>
<dbReference type="NCBIfam" id="NF001422">
    <property type="entry name" value="PRK00296.1"/>
    <property type="match status" value="1"/>
</dbReference>
<dbReference type="Pfam" id="PF03776">
    <property type="entry name" value="MinE"/>
    <property type="match status" value="1"/>
</dbReference>
<dbReference type="SUPFAM" id="SSF55229">
    <property type="entry name" value="Cell division protein MinE topological specificity domain"/>
    <property type="match status" value="1"/>
</dbReference>
<comment type="function">
    <text evidence="1">Prevents the cell division inhibition by proteins MinC and MinD at internal division sites while permitting inhibition at polar sites. This ensures cell division at the proper site by restricting the formation of a division septum at the midpoint of the long axis of the cell.</text>
</comment>
<comment type="similarity">
    <text evidence="1">Belongs to the MinE family.</text>
</comment>
<evidence type="ECO:0000255" key="1">
    <source>
        <dbReference type="HAMAP-Rule" id="MF_00262"/>
    </source>
</evidence>
<reference key="1">
    <citation type="journal article" date="2011" name="J. Bacteriol.">
        <title>Comparative genomics of 28 Salmonella enterica isolates: evidence for CRISPR-mediated adaptive sublineage evolution.</title>
        <authorList>
            <person name="Fricke W.F."/>
            <person name="Mammel M.K."/>
            <person name="McDermott P.F."/>
            <person name="Tartera C."/>
            <person name="White D.G."/>
            <person name="Leclerc J.E."/>
            <person name="Ravel J."/>
            <person name="Cebula T.A."/>
        </authorList>
    </citation>
    <scope>NUCLEOTIDE SEQUENCE [LARGE SCALE GENOMIC DNA]</scope>
    <source>
        <strain>SL476</strain>
    </source>
</reference>